<dbReference type="EC" id="4.2.1.33" evidence="1"/>
<dbReference type="EMBL" id="CP001389">
    <property type="protein sequence ID" value="ACP26875.1"/>
    <property type="molecule type" value="Genomic_DNA"/>
</dbReference>
<dbReference type="RefSeq" id="WP_012709627.1">
    <property type="nucleotide sequence ID" value="NC_012587.1"/>
</dbReference>
<dbReference type="RefSeq" id="YP_002827628.1">
    <property type="nucleotide sequence ID" value="NC_012587.1"/>
</dbReference>
<dbReference type="SMR" id="C3M9V0"/>
<dbReference type="STRING" id="394.NGR_c31400"/>
<dbReference type="KEGG" id="rhi:NGR_c31400"/>
<dbReference type="PATRIC" id="fig|394.7.peg.5978"/>
<dbReference type="eggNOG" id="COG0065">
    <property type="taxonomic scope" value="Bacteria"/>
</dbReference>
<dbReference type="HOGENOM" id="CLU_006714_3_4_5"/>
<dbReference type="OrthoDB" id="9802769at2"/>
<dbReference type="UniPathway" id="UPA00048">
    <property type="reaction ID" value="UER00071"/>
</dbReference>
<dbReference type="Proteomes" id="UP000001054">
    <property type="component" value="Chromosome"/>
</dbReference>
<dbReference type="GO" id="GO:0003861">
    <property type="term" value="F:3-isopropylmalate dehydratase activity"/>
    <property type="evidence" value="ECO:0007669"/>
    <property type="project" value="UniProtKB-UniRule"/>
</dbReference>
<dbReference type="GO" id="GO:0051539">
    <property type="term" value="F:4 iron, 4 sulfur cluster binding"/>
    <property type="evidence" value="ECO:0007669"/>
    <property type="project" value="UniProtKB-KW"/>
</dbReference>
<dbReference type="GO" id="GO:0046872">
    <property type="term" value="F:metal ion binding"/>
    <property type="evidence" value="ECO:0007669"/>
    <property type="project" value="UniProtKB-KW"/>
</dbReference>
<dbReference type="GO" id="GO:0009098">
    <property type="term" value="P:L-leucine biosynthetic process"/>
    <property type="evidence" value="ECO:0007669"/>
    <property type="project" value="UniProtKB-UniRule"/>
</dbReference>
<dbReference type="CDD" id="cd01583">
    <property type="entry name" value="IPMI"/>
    <property type="match status" value="1"/>
</dbReference>
<dbReference type="FunFam" id="3.30.499.10:FF:000006">
    <property type="entry name" value="3-isopropylmalate dehydratase large subunit"/>
    <property type="match status" value="1"/>
</dbReference>
<dbReference type="FunFam" id="3.30.499.10:FF:000007">
    <property type="entry name" value="3-isopropylmalate dehydratase large subunit"/>
    <property type="match status" value="1"/>
</dbReference>
<dbReference type="Gene3D" id="3.30.499.10">
    <property type="entry name" value="Aconitase, domain 3"/>
    <property type="match status" value="2"/>
</dbReference>
<dbReference type="HAMAP" id="MF_01026">
    <property type="entry name" value="LeuC_type1"/>
    <property type="match status" value="1"/>
</dbReference>
<dbReference type="InterPro" id="IPR004430">
    <property type="entry name" value="3-IsopropMal_deHydase_lsu"/>
</dbReference>
<dbReference type="InterPro" id="IPR015931">
    <property type="entry name" value="Acnase/IPM_dHydase_lsu_aba_1/3"/>
</dbReference>
<dbReference type="InterPro" id="IPR001030">
    <property type="entry name" value="Acoase/IPM_deHydtase_lsu_aba"/>
</dbReference>
<dbReference type="InterPro" id="IPR018136">
    <property type="entry name" value="Aconitase_4Fe-4S_BS"/>
</dbReference>
<dbReference type="InterPro" id="IPR036008">
    <property type="entry name" value="Aconitase_4Fe-4S_dom"/>
</dbReference>
<dbReference type="InterPro" id="IPR050067">
    <property type="entry name" value="IPM_dehydratase_rel_enz"/>
</dbReference>
<dbReference type="InterPro" id="IPR033941">
    <property type="entry name" value="IPMI_cat"/>
</dbReference>
<dbReference type="NCBIfam" id="TIGR00170">
    <property type="entry name" value="leuC"/>
    <property type="match status" value="1"/>
</dbReference>
<dbReference type="NCBIfam" id="NF004016">
    <property type="entry name" value="PRK05478.1"/>
    <property type="match status" value="1"/>
</dbReference>
<dbReference type="NCBIfam" id="NF009116">
    <property type="entry name" value="PRK12466.1"/>
    <property type="match status" value="1"/>
</dbReference>
<dbReference type="PANTHER" id="PTHR43822:SF9">
    <property type="entry name" value="3-ISOPROPYLMALATE DEHYDRATASE"/>
    <property type="match status" value="1"/>
</dbReference>
<dbReference type="PANTHER" id="PTHR43822">
    <property type="entry name" value="HOMOACONITASE, MITOCHONDRIAL-RELATED"/>
    <property type="match status" value="1"/>
</dbReference>
<dbReference type="Pfam" id="PF00330">
    <property type="entry name" value="Aconitase"/>
    <property type="match status" value="1"/>
</dbReference>
<dbReference type="PRINTS" id="PR00415">
    <property type="entry name" value="ACONITASE"/>
</dbReference>
<dbReference type="SUPFAM" id="SSF53732">
    <property type="entry name" value="Aconitase iron-sulfur domain"/>
    <property type="match status" value="1"/>
</dbReference>
<dbReference type="PROSITE" id="PS00450">
    <property type="entry name" value="ACONITASE_1"/>
    <property type="match status" value="1"/>
</dbReference>
<dbReference type="PROSITE" id="PS01244">
    <property type="entry name" value="ACONITASE_2"/>
    <property type="match status" value="1"/>
</dbReference>
<feature type="chain" id="PRO_1000149371" description="3-isopropylmalate dehydratase large subunit">
    <location>
        <begin position="1"/>
        <end position="469"/>
    </location>
</feature>
<feature type="binding site" evidence="1">
    <location>
        <position position="350"/>
    </location>
    <ligand>
        <name>[4Fe-4S] cluster</name>
        <dbReference type="ChEBI" id="CHEBI:49883"/>
    </ligand>
</feature>
<feature type="binding site" evidence="1">
    <location>
        <position position="410"/>
    </location>
    <ligand>
        <name>[4Fe-4S] cluster</name>
        <dbReference type="ChEBI" id="CHEBI:49883"/>
    </ligand>
</feature>
<feature type="binding site" evidence="1">
    <location>
        <position position="413"/>
    </location>
    <ligand>
        <name>[4Fe-4S] cluster</name>
        <dbReference type="ChEBI" id="CHEBI:49883"/>
    </ligand>
</feature>
<sequence length="469" mass="50955">MSAPRTLYDKIWDDHLVNQQDDGTCLLYIDRHLVHEVTSPQAFEGLRMAGRKVRAPEKTLAVVDHNVPTSPDRHLGIKNEESRIQVEALARNAADFGVEYYSENDKRQGIVHIVGPEQGFTLPGMTIVCGDSHTSTHGAFGALAHGIGTSEVEHVLATQTLIQKKAKNMLVRVDGQLPPGVTAKDIILAIIGEIGTAGGTGHVIEFAGEAIRSLSMEGRMTICNMTIEGGARAGLIAPDETTFDYIKDKPRAPKGKAWDMALDYWKTLHTDEGAHYDRIVVLDAADLPPIVSWGSSPEDVISVQGAVPNPDDIQEETKRASKWRALDYMGLKPGTKITDIAVDRVFIGSCTNGRIEDLRAVAKVVEGRKVASTVSAMIVPGSGLVKEQAEAEGLDKIFKEAGFDWREPGCSMCLAMNDDRLKPGERCASTSNRNFEGRQGFKGRTHLVSPAMAAAAAVAGHFVDIREWK</sequence>
<keyword id="KW-0004">4Fe-4S</keyword>
<keyword id="KW-0028">Amino-acid biosynthesis</keyword>
<keyword id="KW-0100">Branched-chain amino acid biosynthesis</keyword>
<keyword id="KW-0408">Iron</keyword>
<keyword id="KW-0411">Iron-sulfur</keyword>
<keyword id="KW-0432">Leucine biosynthesis</keyword>
<keyword id="KW-0456">Lyase</keyword>
<keyword id="KW-0479">Metal-binding</keyword>
<keyword id="KW-1185">Reference proteome</keyword>
<comment type="function">
    <text evidence="1">Catalyzes the isomerization between 2-isopropylmalate and 3-isopropylmalate, via the formation of 2-isopropylmaleate.</text>
</comment>
<comment type="catalytic activity">
    <reaction evidence="1">
        <text>(2R,3S)-3-isopropylmalate = (2S)-2-isopropylmalate</text>
        <dbReference type="Rhea" id="RHEA:32287"/>
        <dbReference type="ChEBI" id="CHEBI:1178"/>
        <dbReference type="ChEBI" id="CHEBI:35121"/>
        <dbReference type="EC" id="4.2.1.33"/>
    </reaction>
</comment>
<comment type="cofactor">
    <cofactor evidence="1">
        <name>[4Fe-4S] cluster</name>
        <dbReference type="ChEBI" id="CHEBI:49883"/>
    </cofactor>
    <text evidence="1">Binds 1 [4Fe-4S] cluster per subunit.</text>
</comment>
<comment type="pathway">
    <text evidence="1">Amino-acid biosynthesis; L-leucine biosynthesis; L-leucine from 3-methyl-2-oxobutanoate: step 2/4.</text>
</comment>
<comment type="subunit">
    <text evidence="1">Heterodimer of LeuC and LeuD.</text>
</comment>
<comment type="similarity">
    <text evidence="1">Belongs to the aconitase/IPM isomerase family. LeuC type 1 subfamily.</text>
</comment>
<organism>
    <name type="scientific">Sinorhizobium fredii (strain NBRC 101917 / NGR234)</name>
    <dbReference type="NCBI Taxonomy" id="394"/>
    <lineage>
        <taxon>Bacteria</taxon>
        <taxon>Pseudomonadati</taxon>
        <taxon>Pseudomonadota</taxon>
        <taxon>Alphaproteobacteria</taxon>
        <taxon>Hyphomicrobiales</taxon>
        <taxon>Rhizobiaceae</taxon>
        <taxon>Sinorhizobium/Ensifer group</taxon>
        <taxon>Sinorhizobium</taxon>
    </lineage>
</organism>
<proteinExistence type="inferred from homology"/>
<name>LEUC_SINFN</name>
<reference key="1">
    <citation type="journal article" date="2009" name="Appl. Environ. Microbiol.">
        <title>Rhizobium sp. strain NGR234 possesses a remarkable number of secretion systems.</title>
        <authorList>
            <person name="Schmeisser C."/>
            <person name="Liesegang H."/>
            <person name="Krysciak D."/>
            <person name="Bakkou N."/>
            <person name="Le Quere A."/>
            <person name="Wollherr A."/>
            <person name="Heinemeyer I."/>
            <person name="Morgenstern B."/>
            <person name="Pommerening-Roeser A."/>
            <person name="Flores M."/>
            <person name="Palacios R."/>
            <person name="Brenner S."/>
            <person name="Gottschalk G."/>
            <person name="Schmitz R.A."/>
            <person name="Broughton W.J."/>
            <person name="Perret X."/>
            <person name="Strittmatter A.W."/>
            <person name="Streit W.R."/>
        </authorList>
    </citation>
    <scope>NUCLEOTIDE SEQUENCE [LARGE SCALE GENOMIC DNA]</scope>
    <source>
        <strain>NBRC 101917 / NGR234</strain>
    </source>
</reference>
<protein>
    <recommendedName>
        <fullName evidence="1">3-isopropylmalate dehydratase large subunit</fullName>
        <ecNumber evidence="1">4.2.1.33</ecNumber>
    </recommendedName>
    <alternativeName>
        <fullName evidence="1">Alpha-IPM isomerase</fullName>
        <shortName evidence="1">IPMI</shortName>
    </alternativeName>
    <alternativeName>
        <fullName evidence="1">Isopropylmalate isomerase</fullName>
    </alternativeName>
</protein>
<evidence type="ECO:0000255" key="1">
    <source>
        <dbReference type="HAMAP-Rule" id="MF_01026"/>
    </source>
</evidence>
<gene>
    <name evidence="1" type="primary">leuC</name>
    <name type="ordered locus">NGR_c31400</name>
</gene>
<accession>C3M9V0</accession>